<name>COL12_DANRE</name>
<accession>A5PMY6</accession>
<accession>Q08CB7</accession>
<organism>
    <name type="scientific">Danio rerio</name>
    <name type="common">Zebrafish</name>
    <name type="synonym">Brachydanio rerio</name>
    <dbReference type="NCBI Taxonomy" id="7955"/>
    <lineage>
        <taxon>Eukaryota</taxon>
        <taxon>Metazoa</taxon>
        <taxon>Chordata</taxon>
        <taxon>Craniata</taxon>
        <taxon>Vertebrata</taxon>
        <taxon>Euteleostomi</taxon>
        <taxon>Actinopterygii</taxon>
        <taxon>Neopterygii</taxon>
        <taxon>Teleostei</taxon>
        <taxon>Ostariophysi</taxon>
        <taxon>Cypriniformes</taxon>
        <taxon>Danionidae</taxon>
        <taxon>Danioninae</taxon>
        <taxon>Danio</taxon>
    </lineage>
</organism>
<dbReference type="EMBL" id="BX927088">
    <property type="protein sequence ID" value="CAN88233.1"/>
    <property type="molecule type" value="Genomic_DNA"/>
</dbReference>
<dbReference type="EMBL" id="BC124303">
    <property type="protein sequence ID" value="AAI24304.1"/>
    <property type="molecule type" value="mRNA"/>
</dbReference>
<dbReference type="RefSeq" id="NP_001116312.1">
    <property type="nucleotide sequence ID" value="NM_001122840.1"/>
</dbReference>
<dbReference type="SMR" id="A5PMY6"/>
<dbReference type="FunCoup" id="A5PMY6">
    <property type="interactions" value="1084"/>
</dbReference>
<dbReference type="STRING" id="7955.ENSDARP00000081297"/>
<dbReference type="PaxDb" id="7955-ENSDARP00000111997"/>
<dbReference type="PeptideAtlas" id="A5PMY6"/>
<dbReference type="Ensembl" id="ENSDART00000086863">
    <property type="protein sequence ID" value="ENSDARP00000081297"/>
    <property type="gene ID" value="ENSDARG00000061140"/>
</dbReference>
<dbReference type="GeneID" id="558942"/>
<dbReference type="KEGG" id="dre:558942"/>
<dbReference type="AGR" id="ZFIN:ZDB-GENE-030131-9807"/>
<dbReference type="CTD" id="81035"/>
<dbReference type="ZFIN" id="ZDB-GENE-030131-9807">
    <property type="gene designation" value="colec12"/>
</dbReference>
<dbReference type="eggNOG" id="ENOG502QQKQ">
    <property type="taxonomic scope" value="Eukaryota"/>
</dbReference>
<dbReference type="InParanoid" id="A5PMY6"/>
<dbReference type="OMA" id="EANKFCK"/>
<dbReference type="OrthoDB" id="9896688at2759"/>
<dbReference type="PhylomeDB" id="A5PMY6"/>
<dbReference type="PRO" id="PR:A5PMY6"/>
<dbReference type="Proteomes" id="UP000000437">
    <property type="component" value="Chromosome 2"/>
</dbReference>
<dbReference type="Bgee" id="ENSDARG00000061140">
    <property type="expression patterns" value="Expressed in zone of skin and 36 other cell types or tissues"/>
</dbReference>
<dbReference type="GO" id="GO:0005581">
    <property type="term" value="C:collagen trimer"/>
    <property type="evidence" value="ECO:0007669"/>
    <property type="project" value="UniProtKB-KW"/>
</dbReference>
<dbReference type="GO" id="GO:0062023">
    <property type="term" value="C:collagen-containing extracellular matrix"/>
    <property type="evidence" value="ECO:0000318"/>
    <property type="project" value="GO_Central"/>
</dbReference>
<dbReference type="GO" id="GO:0005615">
    <property type="term" value="C:extracellular space"/>
    <property type="evidence" value="ECO:0000318"/>
    <property type="project" value="GO_Central"/>
</dbReference>
<dbReference type="GO" id="GO:0016020">
    <property type="term" value="C:membrane"/>
    <property type="evidence" value="ECO:0007669"/>
    <property type="project" value="UniProtKB-SubCell"/>
</dbReference>
<dbReference type="GO" id="GO:0030246">
    <property type="term" value="F:carbohydrate binding"/>
    <property type="evidence" value="ECO:0007669"/>
    <property type="project" value="UniProtKB-KW"/>
</dbReference>
<dbReference type="GO" id="GO:0030169">
    <property type="term" value="F:low-density lipoprotein particle binding"/>
    <property type="evidence" value="ECO:0000318"/>
    <property type="project" value="GO_Central"/>
</dbReference>
<dbReference type="GO" id="GO:0046872">
    <property type="term" value="F:metal ion binding"/>
    <property type="evidence" value="ECO:0007669"/>
    <property type="project" value="UniProtKB-KW"/>
</dbReference>
<dbReference type="GO" id="GO:0038187">
    <property type="term" value="F:pattern recognition receptor activity"/>
    <property type="evidence" value="ECO:0000318"/>
    <property type="project" value="GO_Central"/>
</dbReference>
<dbReference type="GO" id="GO:0006910">
    <property type="term" value="P:phagocytosis, recognition"/>
    <property type="evidence" value="ECO:0000318"/>
    <property type="project" value="GO_Central"/>
</dbReference>
<dbReference type="GO" id="GO:0001570">
    <property type="term" value="P:vasculogenesis"/>
    <property type="evidence" value="ECO:0000315"/>
    <property type="project" value="ZFIN"/>
</dbReference>
<dbReference type="Gene3D" id="3.10.100.10">
    <property type="entry name" value="Mannose-Binding Protein A, subunit A"/>
    <property type="match status" value="2"/>
</dbReference>
<dbReference type="InterPro" id="IPR001304">
    <property type="entry name" value="C-type_lectin-like"/>
</dbReference>
<dbReference type="InterPro" id="IPR016186">
    <property type="entry name" value="C-type_lectin-like/link_sf"/>
</dbReference>
<dbReference type="InterPro" id="IPR018378">
    <property type="entry name" value="C-type_lectin_CS"/>
</dbReference>
<dbReference type="InterPro" id="IPR008160">
    <property type="entry name" value="Collagen"/>
</dbReference>
<dbReference type="InterPro" id="IPR016187">
    <property type="entry name" value="CTDL_fold"/>
</dbReference>
<dbReference type="InterPro" id="IPR052376">
    <property type="entry name" value="Oxidative_Scav/Glycosyltrans"/>
</dbReference>
<dbReference type="PANTHER" id="PTHR39082">
    <property type="entry name" value="PHOSPHOLIPASE C-BETA-2-RELATED"/>
    <property type="match status" value="1"/>
</dbReference>
<dbReference type="PANTHER" id="PTHR39082:SF1">
    <property type="entry name" value="SCAVENGER RECEPTOR CLASS A MEMBER 3"/>
    <property type="match status" value="1"/>
</dbReference>
<dbReference type="Pfam" id="PF01391">
    <property type="entry name" value="Collagen"/>
    <property type="match status" value="3"/>
</dbReference>
<dbReference type="Pfam" id="PF00059">
    <property type="entry name" value="Lectin_C"/>
    <property type="match status" value="1"/>
</dbReference>
<dbReference type="SMART" id="SM00034">
    <property type="entry name" value="CLECT"/>
    <property type="match status" value="1"/>
</dbReference>
<dbReference type="SUPFAM" id="SSF56436">
    <property type="entry name" value="C-type lectin-like"/>
    <property type="match status" value="1"/>
</dbReference>
<dbReference type="PROSITE" id="PS00615">
    <property type="entry name" value="C_TYPE_LECTIN_1"/>
    <property type="match status" value="1"/>
</dbReference>
<dbReference type="PROSITE" id="PS50041">
    <property type="entry name" value="C_TYPE_LECTIN_2"/>
    <property type="match status" value="1"/>
</dbReference>
<reference key="1">
    <citation type="journal article" date="2013" name="Nature">
        <title>The zebrafish reference genome sequence and its relationship to the human genome.</title>
        <authorList>
            <person name="Howe K."/>
            <person name="Clark M.D."/>
            <person name="Torroja C.F."/>
            <person name="Torrance J."/>
            <person name="Berthelot C."/>
            <person name="Muffato M."/>
            <person name="Collins J.E."/>
            <person name="Humphray S."/>
            <person name="McLaren K."/>
            <person name="Matthews L."/>
            <person name="McLaren S."/>
            <person name="Sealy I."/>
            <person name="Caccamo M."/>
            <person name="Churcher C."/>
            <person name="Scott C."/>
            <person name="Barrett J.C."/>
            <person name="Koch R."/>
            <person name="Rauch G.J."/>
            <person name="White S."/>
            <person name="Chow W."/>
            <person name="Kilian B."/>
            <person name="Quintais L.T."/>
            <person name="Guerra-Assuncao J.A."/>
            <person name="Zhou Y."/>
            <person name="Gu Y."/>
            <person name="Yen J."/>
            <person name="Vogel J.H."/>
            <person name="Eyre T."/>
            <person name="Redmond S."/>
            <person name="Banerjee R."/>
            <person name="Chi J."/>
            <person name="Fu B."/>
            <person name="Langley E."/>
            <person name="Maguire S.F."/>
            <person name="Laird G.K."/>
            <person name="Lloyd D."/>
            <person name="Kenyon E."/>
            <person name="Donaldson S."/>
            <person name="Sehra H."/>
            <person name="Almeida-King J."/>
            <person name="Loveland J."/>
            <person name="Trevanion S."/>
            <person name="Jones M."/>
            <person name="Quail M."/>
            <person name="Willey D."/>
            <person name="Hunt A."/>
            <person name="Burton J."/>
            <person name="Sims S."/>
            <person name="McLay K."/>
            <person name="Plumb B."/>
            <person name="Davis J."/>
            <person name="Clee C."/>
            <person name="Oliver K."/>
            <person name="Clark R."/>
            <person name="Riddle C."/>
            <person name="Elliot D."/>
            <person name="Threadgold G."/>
            <person name="Harden G."/>
            <person name="Ware D."/>
            <person name="Begum S."/>
            <person name="Mortimore B."/>
            <person name="Kerry G."/>
            <person name="Heath P."/>
            <person name="Phillimore B."/>
            <person name="Tracey A."/>
            <person name="Corby N."/>
            <person name="Dunn M."/>
            <person name="Johnson C."/>
            <person name="Wood J."/>
            <person name="Clark S."/>
            <person name="Pelan S."/>
            <person name="Griffiths G."/>
            <person name="Smith M."/>
            <person name="Glithero R."/>
            <person name="Howden P."/>
            <person name="Barker N."/>
            <person name="Lloyd C."/>
            <person name="Stevens C."/>
            <person name="Harley J."/>
            <person name="Holt K."/>
            <person name="Panagiotidis G."/>
            <person name="Lovell J."/>
            <person name="Beasley H."/>
            <person name="Henderson C."/>
            <person name="Gordon D."/>
            <person name="Auger K."/>
            <person name="Wright D."/>
            <person name="Collins J."/>
            <person name="Raisen C."/>
            <person name="Dyer L."/>
            <person name="Leung K."/>
            <person name="Robertson L."/>
            <person name="Ambridge K."/>
            <person name="Leongamornlert D."/>
            <person name="McGuire S."/>
            <person name="Gilderthorp R."/>
            <person name="Griffiths C."/>
            <person name="Manthravadi D."/>
            <person name="Nichol S."/>
            <person name="Barker G."/>
            <person name="Whitehead S."/>
            <person name="Kay M."/>
            <person name="Brown J."/>
            <person name="Murnane C."/>
            <person name="Gray E."/>
            <person name="Humphries M."/>
            <person name="Sycamore N."/>
            <person name="Barker D."/>
            <person name="Saunders D."/>
            <person name="Wallis J."/>
            <person name="Babbage A."/>
            <person name="Hammond S."/>
            <person name="Mashreghi-Mohammadi M."/>
            <person name="Barr L."/>
            <person name="Martin S."/>
            <person name="Wray P."/>
            <person name="Ellington A."/>
            <person name="Matthews N."/>
            <person name="Ellwood M."/>
            <person name="Woodmansey R."/>
            <person name="Clark G."/>
            <person name="Cooper J."/>
            <person name="Tromans A."/>
            <person name="Grafham D."/>
            <person name="Skuce C."/>
            <person name="Pandian R."/>
            <person name="Andrews R."/>
            <person name="Harrison E."/>
            <person name="Kimberley A."/>
            <person name="Garnett J."/>
            <person name="Fosker N."/>
            <person name="Hall R."/>
            <person name="Garner P."/>
            <person name="Kelly D."/>
            <person name="Bird C."/>
            <person name="Palmer S."/>
            <person name="Gehring I."/>
            <person name="Berger A."/>
            <person name="Dooley C.M."/>
            <person name="Ersan-Urun Z."/>
            <person name="Eser C."/>
            <person name="Geiger H."/>
            <person name="Geisler M."/>
            <person name="Karotki L."/>
            <person name="Kirn A."/>
            <person name="Konantz J."/>
            <person name="Konantz M."/>
            <person name="Oberlander M."/>
            <person name="Rudolph-Geiger S."/>
            <person name="Teucke M."/>
            <person name="Lanz C."/>
            <person name="Raddatz G."/>
            <person name="Osoegawa K."/>
            <person name="Zhu B."/>
            <person name="Rapp A."/>
            <person name="Widaa S."/>
            <person name="Langford C."/>
            <person name="Yang F."/>
            <person name="Schuster S.C."/>
            <person name="Carter N.P."/>
            <person name="Harrow J."/>
            <person name="Ning Z."/>
            <person name="Herrero J."/>
            <person name="Searle S.M."/>
            <person name="Enright A."/>
            <person name="Geisler R."/>
            <person name="Plasterk R.H."/>
            <person name="Lee C."/>
            <person name="Westerfield M."/>
            <person name="de Jong P.J."/>
            <person name="Zon L.I."/>
            <person name="Postlethwait J.H."/>
            <person name="Nusslein-Volhard C."/>
            <person name="Hubbard T.J."/>
            <person name="Roest Crollius H."/>
            <person name="Rogers J."/>
            <person name="Stemple D.L."/>
        </authorList>
    </citation>
    <scope>NUCLEOTIDE SEQUENCE [LARGE SCALE GENOMIC DNA]</scope>
    <source>
        <strain>Tuebingen</strain>
    </source>
</reference>
<reference key="2">
    <citation type="submission" date="2007-06" db="EMBL/GenBank/DDBJ databases">
        <authorList>
            <consortium name="NIH - Zebrafish Gene Collection (ZGC) project"/>
        </authorList>
    </citation>
    <scope>NUCLEOTIDE SEQUENCE [LARGE SCALE MRNA] OF 1-560</scope>
    <source>
        <strain>AB</strain>
        <tissue>Skin</tissue>
    </source>
</reference>
<evidence type="ECO:0000250" key="1"/>
<evidence type="ECO:0000255" key="2"/>
<evidence type="ECO:0000255" key="3">
    <source>
        <dbReference type="PROSITE-ProRule" id="PRU00040"/>
    </source>
</evidence>
<evidence type="ECO:0000256" key="4">
    <source>
        <dbReference type="SAM" id="MobiDB-lite"/>
    </source>
</evidence>
<evidence type="ECO:0000305" key="5"/>
<gene>
    <name type="primary">colec12</name>
    <name type="ORF">si:ch211-212m21.5</name>
</gene>
<sequence length="720" mass="78035">MKDDFNDEEEVQSFGYKRFGIQEGNECTKCKNDWALRVAIALLYVLCALLTIAVAVLGYKVVQRMDNVTEGMQNYGGKITAVETDLKKLDDQTGEKSENATSELHSFKLEFQTLQKQLSDVIVKTSNNRAVLKELQLAGEDMQSGHLSLRDLLESNANVISKVNHTLNTYNSLIDGLKTETARLQSDLHVQTSEQGQNSHSISTLNFTQTQQRNLISSLQRSVEDTGQAVQKLKNDYQSLQQVARQTKADADWLREKVQNLQALAANNSLLTRSNSDSLEDVTSQLTTLSEQVQNTSTITDSHDQSLRELMDQQRDHDNATSIRFDALEARLDSNEGEMDRITGNVSFTTQLLRAISTDLNGLRTCSETVTRHSELLHGLNNSVAETRAESTELKAQQEELAVRLDKEVSSLSIVMDEMKLVDNKHSQLITNFTILQGPPGPRGPRGDKGSMGLPGKTGPKGEKGEKGAPGDAGPKGEKGPAGPPGVPGLKGPPGSRGSPGPKGSRGSGGRQGPSGEKGDPGIPGMPGRDGQPGPTGPQGPQGLRGPAGPAGLEGARGPVGPIGPPGPPGLPGLPAPPIVVPPVDPQGFVNRQVAPPPTTTPGCPPQWKGFREQCYHFSAPMESLNFDEAKERCSNLSSSMLIINDEEEQLWIKRQISGKGYFWLGLKWKPGQPDNWSHGHEAGEDCAGLIHEASWNDFFCTERIGFICERTNESKVPVL</sequence>
<proteinExistence type="evidence at transcript level"/>
<comment type="function">
    <text evidence="1">Scavenger receptor that displays several functions associated with host defense. Binds to carbohydrates (By similarity).</text>
</comment>
<comment type="subcellular location">
    <subcellularLocation>
        <location>Membrane</location>
        <topology>Single-pass type II membrane protein</topology>
    </subcellularLocation>
</comment>
<protein>
    <recommendedName>
        <fullName>Collectin-12</fullName>
    </recommendedName>
</protein>
<feature type="chain" id="PRO_0000318685" description="Collectin-12">
    <location>
        <begin position="1"/>
        <end position="720"/>
    </location>
</feature>
<feature type="topological domain" description="Cytoplasmic" evidence="2">
    <location>
        <begin position="1"/>
        <end position="37"/>
    </location>
</feature>
<feature type="transmembrane region" description="Helical; Signal-anchor for type II membrane protein" evidence="2">
    <location>
        <begin position="38"/>
        <end position="58"/>
    </location>
</feature>
<feature type="topological domain" description="Extracellular" evidence="2">
    <location>
        <begin position="59"/>
        <end position="720"/>
    </location>
</feature>
<feature type="domain" description="Collagen-like 1">
    <location>
        <begin position="444"/>
        <end position="503"/>
    </location>
</feature>
<feature type="domain" description="Collagen-like 2">
    <location>
        <begin position="510"/>
        <end position="569"/>
    </location>
</feature>
<feature type="domain" description="C-type lectin" evidence="3">
    <location>
        <begin position="611"/>
        <end position="710"/>
    </location>
</feature>
<feature type="region of interest" description="Disordered" evidence="4">
    <location>
        <begin position="433"/>
        <end position="576"/>
    </location>
</feature>
<feature type="coiled-coil region" evidence="2">
    <location>
        <begin position="95"/>
        <end position="120"/>
    </location>
</feature>
<feature type="coiled-coil region" evidence="2">
    <location>
        <begin position="216"/>
        <end position="267"/>
    </location>
</feature>
<feature type="coiled-coil region" evidence="2">
    <location>
        <begin position="377"/>
        <end position="408"/>
    </location>
</feature>
<feature type="compositionally biased region" description="Basic and acidic residues" evidence="4">
    <location>
        <begin position="460"/>
        <end position="479"/>
    </location>
</feature>
<feature type="compositionally biased region" description="Low complexity" evidence="4">
    <location>
        <begin position="488"/>
        <end position="503"/>
    </location>
</feature>
<feature type="compositionally biased region" description="Gly residues" evidence="4">
    <location>
        <begin position="504"/>
        <end position="513"/>
    </location>
</feature>
<feature type="compositionally biased region" description="Low complexity" evidence="4">
    <location>
        <begin position="527"/>
        <end position="560"/>
    </location>
</feature>
<feature type="compositionally biased region" description="Pro residues" evidence="4">
    <location>
        <begin position="562"/>
        <end position="576"/>
    </location>
</feature>
<feature type="binding site" evidence="1">
    <location>
        <position position="643"/>
    </location>
    <ligand>
        <name>Ca(2+)</name>
        <dbReference type="ChEBI" id="CHEBI:29108"/>
        <label>1</label>
    </ligand>
</feature>
<feature type="binding site" evidence="1">
    <location>
        <position position="645"/>
    </location>
    <ligand>
        <name>Ca(2+)</name>
        <dbReference type="ChEBI" id="CHEBI:29108"/>
        <label>1</label>
    </ligand>
</feature>
<feature type="binding site" evidence="1">
    <location>
        <position position="649"/>
    </location>
    <ligand>
        <name>Ca(2+)</name>
        <dbReference type="ChEBI" id="CHEBI:29108"/>
        <label>1</label>
    </ligand>
</feature>
<feature type="binding site" evidence="1">
    <location>
        <position position="670"/>
    </location>
    <ligand>
        <name>a carbohydrate</name>
        <dbReference type="ChEBI" id="CHEBI:16646"/>
    </ligand>
</feature>
<feature type="binding site" evidence="1">
    <location>
        <position position="673"/>
    </location>
    <ligand>
        <name>a carbohydrate</name>
        <dbReference type="ChEBI" id="CHEBI:16646"/>
    </ligand>
</feature>
<feature type="binding site" evidence="1">
    <location>
        <position position="673"/>
    </location>
    <ligand>
        <name>Ca(2+)</name>
        <dbReference type="ChEBI" id="CHEBI:29108"/>
        <label>3</label>
    </ligand>
</feature>
<feature type="binding site" evidence="1">
    <location>
        <position position="675"/>
    </location>
    <ligand>
        <name>a carbohydrate</name>
        <dbReference type="ChEBI" id="CHEBI:16646"/>
    </ligand>
</feature>
<feature type="binding site" evidence="1">
    <location>
        <position position="675"/>
    </location>
    <ligand>
        <name>Ca(2+)</name>
        <dbReference type="ChEBI" id="CHEBI:29108"/>
        <label>3</label>
    </ligand>
</feature>
<feature type="binding site" evidence="1">
    <location>
        <position position="676"/>
    </location>
    <ligand>
        <name>Ca(2+)</name>
        <dbReference type="ChEBI" id="CHEBI:29108"/>
        <label>2</label>
    </ligand>
</feature>
<feature type="binding site" evidence="1">
    <location>
        <position position="685"/>
    </location>
    <ligand>
        <name>a carbohydrate</name>
        <dbReference type="ChEBI" id="CHEBI:16646"/>
    </ligand>
</feature>
<feature type="binding site" evidence="1">
    <location>
        <position position="685"/>
    </location>
    <ligand>
        <name>Ca(2+)</name>
        <dbReference type="ChEBI" id="CHEBI:29108"/>
        <label>2</label>
    </ligand>
</feature>
<feature type="binding site" evidence="1">
    <location>
        <position position="685"/>
    </location>
    <ligand>
        <name>Ca(2+)</name>
        <dbReference type="ChEBI" id="CHEBI:29108"/>
        <label>3</label>
    </ligand>
</feature>
<feature type="binding site" evidence="1">
    <location>
        <position position="686"/>
    </location>
    <ligand>
        <name>Ca(2+)</name>
        <dbReference type="ChEBI" id="CHEBI:29108"/>
        <label>2</label>
    </ligand>
</feature>
<feature type="binding site" evidence="1">
    <location>
        <position position="697"/>
    </location>
    <ligand>
        <name>a carbohydrate</name>
        <dbReference type="ChEBI" id="CHEBI:16646"/>
    </ligand>
</feature>
<feature type="binding site" evidence="1">
    <location>
        <position position="697"/>
    </location>
    <ligand>
        <name>Ca(2+)</name>
        <dbReference type="ChEBI" id="CHEBI:29108"/>
        <label>3</label>
    </ligand>
</feature>
<feature type="binding site" evidence="1">
    <location>
        <position position="698"/>
    </location>
    <ligand>
        <name>a carbohydrate</name>
        <dbReference type="ChEBI" id="CHEBI:16646"/>
    </ligand>
</feature>
<feature type="binding site" evidence="1">
    <location>
        <position position="698"/>
    </location>
    <ligand>
        <name>Ca(2+)</name>
        <dbReference type="ChEBI" id="CHEBI:29108"/>
        <label>3</label>
    </ligand>
</feature>
<feature type="binding site" evidence="1">
    <location>
        <position position="710"/>
    </location>
    <ligand>
        <name>Ca(2+)</name>
        <dbReference type="ChEBI" id="CHEBI:29108"/>
        <label>1</label>
    </ligand>
</feature>
<feature type="disulfide bond" evidence="3">
    <location>
        <begin position="604"/>
        <end position="615"/>
    </location>
</feature>
<feature type="disulfide bond" evidence="3">
    <location>
        <begin position="634"/>
        <end position="709"/>
    </location>
</feature>
<feature type="disulfide bond" evidence="3">
    <location>
        <begin position="687"/>
        <end position="701"/>
    </location>
</feature>
<feature type="sequence conflict" description="In Ref. 2; AAI24304." evidence="5" ref="2">
    <original>T</original>
    <variation>M</variation>
    <location>
        <position position="80"/>
    </location>
</feature>
<feature type="sequence conflict" description="In Ref. 2; AAI24304." evidence="5" ref="2">
    <original>Q</original>
    <variation>R</variation>
    <location>
        <position position="112"/>
    </location>
</feature>
<keyword id="KW-0106">Calcium</keyword>
<keyword id="KW-0175">Coiled coil</keyword>
<keyword id="KW-0176">Collagen</keyword>
<keyword id="KW-1015">Disulfide bond</keyword>
<keyword id="KW-0430">Lectin</keyword>
<keyword id="KW-0472">Membrane</keyword>
<keyword id="KW-0479">Metal-binding</keyword>
<keyword id="KW-0675">Receptor</keyword>
<keyword id="KW-1185">Reference proteome</keyword>
<keyword id="KW-0677">Repeat</keyword>
<keyword id="KW-0735">Signal-anchor</keyword>
<keyword id="KW-0812">Transmembrane</keyword>
<keyword id="KW-1133">Transmembrane helix</keyword>